<keyword id="KW-0025">Alternative splicing</keyword>
<keyword id="KW-0072">Autophagy</keyword>
<keyword id="KW-0256">Endoplasmic reticulum</keyword>
<keyword id="KW-0551">Lipid droplet</keyword>
<keyword id="KW-0445">Lipid transport</keyword>
<keyword id="KW-0472">Membrane</keyword>
<keyword id="KW-0597">Phosphoprotein</keyword>
<keyword id="KW-1185">Reference proteome</keyword>
<keyword id="KW-0813">Transport</keyword>
<accession>Q80XK6</accession>
<accession>A0PJL7</accession>
<accession>Q8BIQ4</accession>
<accession>Q8BIV0</accession>
<accession>Q8R1H5</accession>
<accession>Q9CWK6</accession>
<feature type="chain" id="PRO_0000089910" description="Autophagy-related protein 2 homolog B">
    <location>
        <begin position="1"/>
        <end position="2075"/>
    </location>
</feature>
<feature type="domain" description="Chorein N-terminal" evidence="4">
    <location>
        <begin position="13"/>
        <end position="107"/>
    </location>
</feature>
<feature type="region of interest" description="Disordered" evidence="5">
    <location>
        <begin position="1373"/>
        <end position="1403"/>
    </location>
</feature>
<feature type="region of interest" description="Disordered" evidence="5">
    <location>
        <begin position="1570"/>
        <end position="1593"/>
    </location>
</feature>
<feature type="region of interest" description="Disordered" evidence="5">
    <location>
        <begin position="1759"/>
        <end position="1792"/>
    </location>
</feature>
<feature type="region of interest" description="Disordered" evidence="5">
    <location>
        <begin position="2055"/>
        <end position="2075"/>
    </location>
</feature>
<feature type="compositionally biased region" description="Polar residues" evidence="5">
    <location>
        <begin position="1578"/>
        <end position="1587"/>
    </location>
</feature>
<feature type="compositionally biased region" description="Basic and acidic residues" evidence="5">
    <location>
        <begin position="2058"/>
        <end position="2075"/>
    </location>
</feature>
<feature type="modified residue" description="Phosphoserine" evidence="3">
    <location>
        <position position="255"/>
    </location>
</feature>
<feature type="modified residue" description="Phosphoserine" evidence="9 10">
    <location>
        <position position="379"/>
    </location>
</feature>
<feature type="modified residue" description="Phosphoserine" evidence="3">
    <location>
        <position position="496"/>
    </location>
</feature>
<feature type="modified residue" description="Phosphoserine" evidence="10">
    <location>
        <position position="839"/>
    </location>
</feature>
<feature type="modified residue" description="Phosphoserine" evidence="3">
    <location>
        <position position="885"/>
    </location>
</feature>
<feature type="modified residue" description="Phosphoserine" evidence="3">
    <location>
        <position position="898"/>
    </location>
</feature>
<feature type="modified residue" description="Phosphoserine" evidence="10">
    <location>
        <position position="1007"/>
    </location>
</feature>
<feature type="modified residue" description="Phosphotyrosine" evidence="10">
    <location>
        <position position="1011"/>
    </location>
</feature>
<feature type="modified residue" description="Phosphoserine" evidence="10">
    <location>
        <position position="1015"/>
    </location>
</feature>
<feature type="modified residue" description="Phosphoserine" evidence="10">
    <location>
        <position position="1017"/>
    </location>
</feature>
<feature type="modified residue" description="Phosphothreonine" evidence="10">
    <location>
        <position position="1021"/>
    </location>
</feature>
<feature type="modified residue" description="Phosphoserine" evidence="3">
    <location>
        <position position="1525"/>
    </location>
</feature>
<feature type="splice variant" id="VSP_035038" description="In isoform 2." evidence="6">
    <location>
        <begin position="1"/>
        <end position="1890"/>
    </location>
</feature>
<feature type="splice variant" id="VSP_035039" description="In isoform 3." evidence="6">
    <location>
        <begin position="577"/>
        <end position="2075"/>
    </location>
</feature>
<feature type="sequence conflict" description="In Ref. 2; BAC28052." evidence="7" ref="2">
    <original>A</original>
    <variation>T</variation>
    <location>
        <position position="128"/>
    </location>
</feature>
<feature type="sequence conflict" description="In Ref. 2; BAC38812." evidence="7" ref="2">
    <original>R</original>
    <variation>Q</variation>
    <location>
        <position position="356"/>
    </location>
</feature>
<feature type="sequence conflict" description="In Ref. 1; AAH46427." evidence="7" ref="1">
    <original>I</original>
    <variation>IS</variation>
    <location>
        <position position="1577"/>
    </location>
</feature>
<feature type="sequence conflict" description="In Ref. 1; AAH62182." evidence="7" ref="1">
    <original>K</original>
    <variation>R</variation>
    <location>
        <position position="1914"/>
    </location>
</feature>
<evidence type="ECO:0000250" key="1">
    <source>
        <dbReference type="UniProtKB" id="P53855"/>
    </source>
</evidence>
<evidence type="ECO:0000250" key="2">
    <source>
        <dbReference type="UniProtKB" id="Q2TAZ0"/>
    </source>
</evidence>
<evidence type="ECO:0000250" key="3">
    <source>
        <dbReference type="UniProtKB" id="Q96BY7"/>
    </source>
</evidence>
<evidence type="ECO:0000255" key="4"/>
<evidence type="ECO:0000256" key="5">
    <source>
        <dbReference type="SAM" id="MobiDB-lite"/>
    </source>
</evidence>
<evidence type="ECO:0000303" key="6">
    <source>
    </source>
</evidence>
<evidence type="ECO:0000305" key="7"/>
<evidence type="ECO:0000312" key="8">
    <source>
        <dbReference type="MGI" id="MGI:1923809"/>
    </source>
</evidence>
<evidence type="ECO:0007744" key="9">
    <source>
    </source>
</evidence>
<evidence type="ECO:0007744" key="10">
    <source>
    </source>
</evidence>
<proteinExistence type="evidence at protein level"/>
<reference key="1">
    <citation type="journal article" date="2005" name="Science">
        <title>The transcriptional landscape of the mammalian genome.</title>
        <authorList>
            <person name="Carninci P."/>
            <person name="Kasukawa T."/>
            <person name="Katayama S."/>
            <person name="Gough J."/>
            <person name="Frith M.C."/>
            <person name="Maeda N."/>
            <person name="Oyama R."/>
            <person name="Ravasi T."/>
            <person name="Lenhard B."/>
            <person name="Wells C."/>
            <person name="Kodzius R."/>
            <person name="Shimokawa K."/>
            <person name="Bajic V.B."/>
            <person name="Brenner S.E."/>
            <person name="Batalov S."/>
            <person name="Forrest A.R."/>
            <person name="Zavolan M."/>
            <person name="Davis M.J."/>
            <person name="Wilming L.G."/>
            <person name="Aidinis V."/>
            <person name="Allen J.E."/>
            <person name="Ambesi-Impiombato A."/>
            <person name="Apweiler R."/>
            <person name="Aturaliya R.N."/>
            <person name="Bailey T.L."/>
            <person name="Bansal M."/>
            <person name="Baxter L."/>
            <person name="Beisel K.W."/>
            <person name="Bersano T."/>
            <person name="Bono H."/>
            <person name="Chalk A.M."/>
            <person name="Chiu K.P."/>
            <person name="Choudhary V."/>
            <person name="Christoffels A."/>
            <person name="Clutterbuck D.R."/>
            <person name="Crowe M.L."/>
            <person name="Dalla E."/>
            <person name="Dalrymple B.P."/>
            <person name="de Bono B."/>
            <person name="Della Gatta G."/>
            <person name="di Bernardo D."/>
            <person name="Down T."/>
            <person name="Engstrom P."/>
            <person name="Fagiolini M."/>
            <person name="Faulkner G."/>
            <person name="Fletcher C.F."/>
            <person name="Fukushima T."/>
            <person name="Furuno M."/>
            <person name="Futaki S."/>
            <person name="Gariboldi M."/>
            <person name="Georgii-Hemming P."/>
            <person name="Gingeras T.R."/>
            <person name="Gojobori T."/>
            <person name="Green R.E."/>
            <person name="Gustincich S."/>
            <person name="Harbers M."/>
            <person name="Hayashi Y."/>
            <person name="Hensch T.K."/>
            <person name="Hirokawa N."/>
            <person name="Hill D."/>
            <person name="Huminiecki L."/>
            <person name="Iacono M."/>
            <person name="Ikeo K."/>
            <person name="Iwama A."/>
            <person name="Ishikawa T."/>
            <person name="Jakt M."/>
            <person name="Kanapin A."/>
            <person name="Katoh M."/>
            <person name="Kawasawa Y."/>
            <person name="Kelso J."/>
            <person name="Kitamura H."/>
            <person name="Kitano H."/>
            <person name="Kollias G."/>
            <person name="Krishnan S.P."/>
            <person name="Kruger A."/>
            <person name="Kummerfeld S.K."/>
            <person name="Kurochkin I.V."/>
            <person name="Lareau L.F."/>
            <person name="Lazarevic D."/>
            <person name="Lipovich L."/>
            <person name="Liu J."/>
            <person name="Liuni S."/>
            <person name="McWilliam S."/>
            <person name="Madan Babu M."/>
            <person name="Madera M."/>
            <person name="Marchionni L."/>
            <person name="Matsuda H."/>
            <person name="Matsuzawa S."/>
            <person name="Miki H."/>
            <person name="Mignone F."/>
            <person name="Miyake S."/>
            <person name="Morris K."/>
            <person name="Mottagui-Tabar S."/>
            <person name="Mulder N."/>
            <person name="Nakano N."/>
            <person name="Nakauchi H."/>
            <person name="Ng P."/>
            <person name="Nilsson R."/>
            <person name="Nishiguchi S."/>
            <person name="Nishikawa S."/>
            <person name="Nori F."/>
            <person name="Ohara O."/>
            <person name="Okazaki Y."/>
            <person name="Orlando V."/>
            <person name="Pang K.C."/>
            <person name="Pavan W.J."/>
            <person name="Pavesi G."/>
            <person name="Pesole G."/>
            <person name="Petrovsky N."/>
            <person name="Piazza S."/>
            <person name="Reed J."/>
            <person name="Reid J.F."/>
            <person name="Ring B.Z."/>
            <person name="Ringwald M."/>
            <person name="Rost B."/>
            <person name="Ruan Y."/>
            <person name="Salzberg S.L."/>
            <person name="Sandelin A."/>
            <person name="Schneider C."/>
            <person name="Schoenbach C."/>
            <person name="Sekiguchi K."/>
            <person name="Semple C.A."/>
            <person name="Seno S."/>
            <person name="Sessa L."/>
            <person name="Sheng Y."/>
            <person name="Shibata Y."/>
            <person name="Shimada H."/>
            <person name="Shimada K."/>
            <person name="Silva D."/>
            <person name="Sinclair B."/>
            <person name="Sperling S."/>
            <person name="Stupka E."/>
            <person name="Sugiura K."/>
            <person name="Sultana R."/>
            <person name="Takenaka Y."/>
            <person name="Taki K."/>
            <person name="Tammoja K."/>
            <person name="Tan S.L."/>
            <person name="Tang S."/>
            <person name="Taylor M.S."/>
            <person name="Tegner J."/>
            <person name="Teichmann S.A."/>
            <person name="Ueda H.R."/>
            <person name="van Nimwegen E."/>
            <person name="Verardo R."/>
            <person name="Wei C.L."/>
            <person name="Yagi K."/>
            <person name="Yamanishi H."/>
            <person name="Zabarovsky E."/>
            <person name="Zhu S."/>
            <person name="Zimmer A."/>
            <person name="Hide W."/>
            <person name="Bult C."/>
            <person name="Grimmond S.M."/>
            <person name="Teasdale R.D."/>
            <person name="Liu E.T."/>
            <person name="Brusic V."/>
            <person name="Quackenbush J."/>
            <person name="Wahlestedt C."/>
            <person name="Mattick J.S."/>
            <person name="Hume D.A."/>
            <person name="Kai C."/>
            <person name="Sasaki D."/>
            <person name="Tomaru Y."/>
            <person name="Fukuda S."/>
            <person name="Kanamori-Katayama M."/>
            <person name="Suzuki M."/>
            <person name="Aoki J."/>
            <person name="Arakawa T."/>
            <person name="Iida J."/>
            <person name="Imamura K."/>
            <person name="Itoh M."/>
            <person name="Kato T."/>
            <person name="Kawaji H."/>
            <person name="Kawagashira N."/>
            <person name="Kawashima T."/>
            <person name="Kojima M."/>
            <person name="Kondo S."/>
            <person name="Konno H."/>
            <person name="Nakano K."/>
            <person name="Ninomiya N."/>
            <person name="Nishio T."/>
            <person name="Okada M."/>
            <person name="Plessy C."/>
            <person name="Shibata K."/>
            <person name="Shiraki T."/>
            <person name="Suzuki S."/>
            <person name="Tagami M."/>
            <person name="Waki K."/>
            <person name="Watahiki A."/>
            <person name="Okamura-Oho Y."/>
            <person name="Suzuki H."/>
            <person name="Kawai J."/>
            <person name="Hayashizaki Y."/>
        </authorList>
    </citation>
    <scope>NUCLEOTIDE SEQUENCE [LARGE SCALE MRNA] (ISOFORMS 2 AND 3)</scope>
    <scope>NUCLEOTIDE SEQUENCE [LARGE SCALE MRNA] OF 1-797 (ISOFORM 1)</scope>
    <source>
        <strain>C57BL/6J</strain>
        <tissue>Embryonic stem cell</tissue>
        <tissue>Heart</tissue>
        <tissue>Hippocampus</tissue>
        <tissue>Wolffian duct</tissue>
    </source>
</reference>
<reference key="2">
    <citation type="journal article" date="2004" name="Genome Res.">
        <title>The status, quality, and expansion of the NIH full-length cDNA project: the Mammalian Gene Collection (MGC).</title>
        <authorList>
            <consortium name="The MGC Project Team"/>
        </authorList>
    </citation>
    <scope>NUCLEOTIDE SEQUENCE [LARGE SCALE MRNA] (ISOFORM 1)</scope>
    <source>
        <strain>FVB/N</strain>
        <tissue>Colon</tissue>
        <tissue>Limb</tissue>
        <tissue>Liver</tissue>
    </source>
</reference>
<reference key="3">
    <citation type="journal article" date="2007" name="Proc. Natl. Acad. Sci. U.S.A.">
        <title>Large-scale phosphorylation analysis of mouse liver.</title>
        <authorList>
            <person name="Villen J."/>
            <person name="Beausoleil S.A."/>
            <person name="Gerber S.A."/>
            <person name="Gygi S.P."/>
        </authorList>
    </citation>
    <scope>PHOSPHORYLATION [LARGE SCALE ANALYSIS] AT SER-379</scope>
    <scope>IDENTIFICATION BY MASS SPECTROMETRY [LARGE SCALE ANALYSIS]</scope>
    <source>
        <tissue>Liver</tissue>
    </source>
</reference>
<reference key="4">
    <citation type="journal article" date="2010" name="Cell">
        <title>A tissue-specific atlas of mouse protein phosphorylation and expression.</title>
        <authorList>
            <person name="Huttlin E.L."/>
            <person name="Jedrychowski M.P."/>
            <person name="Elias J.E."/>
            <person name="Goswami T."/>
            <person name="Rad R."/>
            <person name="Beausoleil S.A."/>
            <person name="Villen J."/>
            <person name="Haas W."/>
            <person name="Sowa M.E."/>
            <person name="Gygi S.P."/>
        </authorList>
    </citation>
    <scope>PHOSPHORYLATION [LARGE SCALE ANALYSIS] AT SER-379; SER-839; SER-1007; TYR-1011; SER-1015; SER-1017 AND THR-1021</scope>
    <scope>IDENTIFICATION BY MASS SPECTROMETRY [LARGE SCALE ANALYSIS]</scope>
    <source>
        <tissue>Brain</tissue>
        <tissue>Brown adipose tissue</tissue>
        <tissue>Heart</tissue>
        <tissue>Kidney</tissue>
        <tissue>Liver</tissue>
        <tissue>Lung</tissue>
        <tissue>Pancreas</tissue>
        <tissue>Spleen</tissue>
        <tissue>Testis</tissue>
    </source>
</reference>
<name>ATG2B_MOUSE</name>
<comment type="function">
    <text evidence="2 3">Lipid transfer protein required for both autophagosome formation and regulation of lipid droplet morphology and dispersion. Tethers the edge of the isolation membrane (IM) to the endoplasmic reticulum (ER) and mediates direct lipid transfer from ER to IM for IM expansion (By similarity). Binds to the ER exit site (ERES), which is the membrane source for autophagosome formation, and extracts phospholipids from the membrane source and transfers them to ATG9 (ATG9A or ATG9B) to the IM for membrane expansion (By similarity). Lipid transfer activity is enhanced by WDR45/WIPI4, which promotes ATG2B-association with phosphatidylinositol 3-monophosphate (PI3P)-containing membranes (By similarity).</text>
</comment>
<comment type="catalytic activity">
    <reaction evidence="2">
        <text>a 1,2-diacyl-sn-glycero-3-phospho-L-serine(in) = a 1,2-diacyl-sn-glycero-3-phospho-L-serine(out)</text>
        <dbReference type="Rhea" id="RHEA:38663"/>
        <dbReference type="ChEBI" id="CHEBI:57262"/>
    </reaction>
</comment>
<comment type="catalytic activity">
    <reaction evidence="2">
        <text>a 1,2-diacyl-sn-glycero-3-phosphoethanolamine(in) = a 1,2-diacyl-sn-glycero-3-phosphoethanolamine(out)</text>
        <dbReference type="Rhea" id="RHEA:38895"/>
        <dbReference type="ChEBI" id="CHEBI:64612"/>
    </reaction>
</comment>
<comment type="subunit">
    <text evidence="3">Interacts with WDR45/WIPI4.</text>
</comment>
<comment type="interaction">
    <interactant intactId="EBI-11566520">
        <id>Q80XK6</id>
    </interactant>
    <interactant intactId="EBI-25767633">
        <id>O07177</id>
        <label>mak</label>
    </interactant>
    <organismsDiffer>true</organismsDiffer>
    <experiments>3</experiments>
</comment>
<comment type="interaction">
    <interactant intactId="EBI-11566520">
        <id>Q80XK6</id>
    </interactant>
    <interactant intactId="EBI-25767563">
        <id>O07422</id>
        <label>Rv0178</label>
    </interactant>
    <organismsDiffer>true</organismsDiffer>
    <experiments>3</experiments>
</comment>
<comment type="interaction">
    <interactant intactId="EBI-11566520">
        <id>Q80XK6</id>
    </interactant>
    <interactant intactId="EBI-25767727">
        <id>I6Y946</id>
        <label>Rv0925c</label>
    </interactant>
    <organismsDiffer>true</organismsDiffer>
    <experiments>3</experiments>
</comment>
<comment type="interaction">
    <interactant intactId="EBI-11566520">
        <id>Q80XK6</id>
    </interactant>
    <interactant intactId="EBI-25767539">
        <id>P9WIT1</id>
        <label>Rv2280</label>
    </interactant>
    <organismsDiffer>true</organismsDiffer>
    <experiments>3</experiments>
</comment>
<comment type="subcellular location">
    <subcellularLocation>
        <location evidence="3">Preautophagosomal structure membrane</location>
        <topology evidence="3">Peripheral membrane protein</topology>
    </subcellularLocation>
    <subcellularLocation>
        <location evidence="3">Lipid droplet</location>
    </subcellularLocation>
    <subcellularLocation>
        <location evidence="1">Endoplasmic reticulum membrane</location>
        <topology evidence="1">Peripheral membrane protein</topology>
    </subcellularLocation>
</comment>
<comment type="alternative products">
    <event type="alternative splicing"/>
    <isoform>
        <id>Q80XK6-2</id>
        <name>1</name>
        <sequence type="displayed"/>
    </isoform>
    <isoform>
        <id>Q80XK6-4</id>
        <name>2</name>
        <sequence type="described" ref="VSP_035038"/>
    </isoform>
    <isoform>
        <id>Q80XK6-5</id>
        <name>3</name>
        <sequence type="described" ref="VSP_035039"/>
    </isoform>
</comment>
<comment type="domain">
    <text evidence="2">The chorein N-terminal domain mediates lipid transfer activity.</text>
</comment>
<comment type="similarity">
    <text evidence="7">Belongs to the ATG2 family.</text>
</comment>
<comment type="sequence caution" evidence="7">
    <conflict type="erroneous initiation">
        <sequence resource="EMBL-CDS" id="AAH46427"/>
    </conflict>
</comment>
<comment type="sequence caution" evidence="7">
    <conflict type="frameshift">
        <sequence resource="EMBL" id="AK085790"/>
    </conflict>
</comment>
<comment type="sequence caution" evidence="7">
    <conflict type="erroneous initiation">
        <sequence resource="EMBL-CDS" id="BAC28052"/>
    </conflict>
</comment>
<protein>
    <recommendedName>
        <fullName>Autophagy-related protein 2 homolog B</fullName>
    </recommendedName>
</protein>
<dbReference type="EMBL" id="AK010577">
    <property type="protein sequence ID" value="BAB27040.1"/>
    <property type="molecule type" value="mRNA"/>
</dbReference>
<dbReference type="EMBL" id="AK032840">
    <property type="protein sequence ID" value="BAC28052.1"/>
    <property type="status" value="ALT_INIT"/>
    <property type="molecule type" value="mRNA"/>
</dbReference>
<dbReference type="EMBL" id="AK083213">
    <property type="protein sequence ID" value="BAC38812.1"/>
    <property type="molecule type" value="mRNA"/>
</dbReference>
<dbReference type="EMBL" id="AK085790">
    <property type="status" value="NOT_ANNOTATED_CDS"/>
    <property type="molecule type" value="mRNA"/>
</dbReference>
<dbReference type="EMBL" id="BC024533">
    <property type="protein sequence ID" value="AAH24533.1"/>
    <property type="molecule type" value="mRNA"/>
</dbReference>
<dbReference type="EMBL" id="BC046427">
    <property type="protein sequence ID" value="AAH46427.3"/>
    <property type="status" value="ALT_INIT"/>
    <property type="molecule type" value="mRNA"/>
</dbReference>
<dbReference type="EMBL" id="BC062182">
    <property type="protein sequence ID" value="AAH62182.1"/>
    <property type="molecule type" value="mRNA"/>
</dbReference>
<dbReference type="CCDS" id="CCDS36550.1">
    <molecule id="Q80XK6-2"/>
</dbReference>
<dbReference type="RefSeq" id="NP_083930.5">
    <molecule id="Q80XK6-2"/>
    <property type="nucleotide sequence ID" value="NM_029654.4"/>
</dbReference>
<dbReference type="BioGRID" id="218175">
    <property type="interactions" value="5"/>
</dbReference>
<dbReference type="FunCoup" id="Q80XK6">
    <property type="interactions" value="1532"/>
</dbReference>
<dbReference type="IntAct" id="Q80XK6">
    <property type="interactions" value="11"/>
</dbReference>
<dbReference type="MINT" id="Q80XK6"/>
<dbReference type="STRING" id="10090.ENSMUSP00000037441"/>
<dbReference type="iPTMnet" id="Q80XK6"/>
<dbReference type="PhosphoSitePlus" id="Q80XK6"/>
<dbReference type="SwissPalm" id="Q80XK6"/>
<dbReference type="jPOST" id="Q80XK6"/>
<dbReference type="PaxDb" id="10090-ENSMUSP00000037441"/>
<dbReference type="PeptideAtlas" id="Q80XK6"/>
<dbReference type="ProteomicsDB" id="265177">
    <molecule id="Q80XK6-2"/>
</dbReference>
<dbReference type="ProteomicsDB" id="265178">
    <molecule id="Q80XK6-4"/>
</dbReference>
<dbReference type="ProteomicsDB" id="265179">
    <molecule id="Q80XK6-5"/>
</dbReference>
<dbReference type="Pumba" id="Q80XK6"/>
<dbReference type="Antibodypedia" id="94">
    <property type="antibodies" value="143 antibodies from 28 providers"/>
</dbReference>
<dbReference type="DNASU" id="76559"/>
<dbReference type="Ensembl" id="ENSMUST00000041055.9">
    <molecule id="Q80XK6-2"/>
    <property type="protein sequence ID" value="ENSMUSP00000037441.8"/>
    <property type="gene ID" value="ENSMUSG00000041341.11"/>
</dbReference>
<dbReference type="GeneID" id="76559"/>
<dbReference type="KEGG" id="mmu:76559"/>
<dbReference type="UCSC" id="uc007oyp.2">
    <molecule id="Q80XK6-2"/>
    <property type="organism name" value="mouse"/>
</dbReference>
<dbReference type="UCSC" id="uc007oyq.1">
    <molecule id="Q80XK6-5"/>
    <property type="organism name" value="mouse"/>
</dbReference>
<dbReference type="UCSC" id="uc029rxu.1">
    <molecule id="Q80XK6-4"/>
    <property type="organism name" value="mouse"/>
</dbReference>
<dbReference type="AGR" id="MGI:1923809"/>
<dbReference type="CTD" id="55102"/>
<dbReference type="MGI" id="MGI:1923809">
    <property type="gene designation" value="Atg2b"/>
</dbReference>
<dbReference type="VEuPathDB" id="HostDB:ENSMUSG00000041341"/>
<dbReference type="eggNOG" id="KOG2993">
    <property type="taxonomic scope" value="Eukaryota"/>
</dbReference>
<dbReference type="GeneTree" id="ENSGT00620000087966"/>
<dbReference type="HOGENOM" id="CLU_001781_0_0_1"/>
<dbReference type="InParanoid" id="Q80XK6"/>
<dbReference type="OMA" id="VDNHFCL"/>
<dbReference type="OrthoDB" id="18982at2759"/>
<dbReference type="PhylomeDB" id="Q80XK6"/>
<dbReference type="TreeFam" id="TF313482"/>
<dbReference type="BioGRID-ORCS" id="76559">
    <property type="hits" value="7 hits in 76 CRISPR screens"/>
</dbReference>
<dbReference type="ChiTaRS" id="Atg2b">
    <property type="organism name" value="mouse"/>
</dbReference>
<dbReference type="PRO" id="PR:Q80XK6"/>
<dbReference type="Proteomes" id="UP000000589">
    <property type="component" value="Chromosome 12"/>
</dbReference>
<dbReference type="RNAct" id="Q80XK6">
    <property type="molecule type" value="protein"/>
</dbReference>
<dbReference type="Bgee" id="ENSMUSG00000041341">
    <property type="expression patterns" value="Expressed in saccule of membranous labyrinth and 237 other cell types or tissues"/>
</dbReference>
<dbReference type="ExpressionAtlas" id="Q80XK6">
    <property type="expression patterns" value="baseline and differential"/>
</dbReference>
<dbReference type="GO" id="GO:0005789">
    <property type="term" value="C:endoplasmic reticulum membrane"/>
    <property type="evidence" value="ECO:0007669"/>
    <property type="project" value="UniProtKB-SubCell"/>
</dbReference>
<dbReference type="GO" id="GO:0005811">
    <property type="term" value="C:lipid droplet"/>
    <property type="evidence" value="ECO:0007669"/>
    <property type="project" value="UniProtKB-SubCell"/>
</dbReference>
<dbReference type="GO" id="GO:0034045">
    <property type="term" value="C:phagophore assembly site membrane"/>
    <property type="evidence" value="ECO:0007669"/>
    <property type="project" value="UniProtKB-SubCell"/>
</dbReference>
<dbReference type="GO" id="GO:0120013">
    <property type="term" value="F:lipid transfer activity"/>
    <property type="evidence" value="ECO:0007669"/>
    <property type="project" value="Ensembl"/>
</dbReference>
<dbReference type="GO" id="GO:0006914">
    <property type="term" value="P:autophagy"/>
    <property type="evidence" value="ECO:0007669"/>
    <property type="project" value="UniProtKB-KW"/>
</dbReference>
<dbReference type="InterPro" id="IPR026849">
    <property type="entry name" value="ATG2"/>
</dbReference>
<dbReference type="PANTHER" id="PTHR13190">
    <property type="entry name" value="AUTOPHAGY-RELATED 2, ISOFORM A"/>
    <property type="match status" value="1"/>
</dbReference>
<dbReference type="PANTHER" id="PTHR13190:SF20">
    <property type="entry name" value="AUTOPHAGY-RELATED PROTEIN 2 HOMOLOG B"/>
    <property type="match status" value="1"/>
</dbReference>
<dbReference type="Pfam" id="PF13329">
    <property type="entry name" value="ATG2_CAD"/>
    <property type="match status" value="2"/>
</dbReference>
<gene>
    <name evidence="8" type="primary">Atg2b</name>
</gene>
<sequence length="2075" mass="231399">MPWPFSESIKKRACRYLLQRYLGHFLQEKLSLEQLSLDLYQGTGSLAQVPLDKWCLNEILESADAPLEVTEGFIQSISLSVPWGSLLQDNCALEVRGLEMVFRPRPRVATGSEPMYWSSFMTSSMQLAKECLSQKLTDEQGEASQPFEGLEKFAETIETVLRRVKVTFIDTVLRIEHVPENSKTGAALEIRVDRTVYCDETADESSGVNVHQPTAFAHKLLQLSGVSLFWDEFSASAKSSPVCSTAPVETEPKLSPSWNPKIVYEPHPQLTRTLPEIAPSDPVQIGRLLGRLELSLTLKQNEVLPGAKLDVDGQIDSFHLFLSPRQVHLLLDMLAAIAGPENSSKIGLANKDRKNRPMQQEDEYRIQMELNRYYLRKDSLSMGVSSEKSFYETETARTPSSREEEVFFSMADMDMSHSLSSLPPLGDPPHMDLELSLTSTYTNTPAGSPLSATVLQPTWGEFADHKEQPVRGPAFQSDVVHPASLQKAALSSRSASVDESRPEFICRLALGIFSVSVLHIDPLSPAETSLNVNPLTRMATDFFSCVEKMDPAIFSTGDFKSFRAVFAEACSHDHLRFIGTGIKVSYEQRQRSASRHFSTDMSVGQMEFLECLFPTDCHSVPSHYTELLTFHSKEGTDAHLPVCLQLHYKHSETRGPQGNQARLSSVPQKAELQIKLNPVCCELDISIVDRLNSLLQPQKLTTVEMMASHMYASYNKHISLHKAFTEVFLDDSHSPANRRVSVQVATPALHLSVRFPIPDLRSDQERGPWFKKSLQKETLHLEFTDLESKTEFVGGSTPEQTKLELTFRELSGSFQEEKGGPSVKFFHVSGGVDGDTASSDDFDWPRMVLKINPPAMHSILERIAAEEEEENDGHYQEEEDGGAHSLKDVCDLRRPAPSPFSSRRVMFENEQMVMPGDPVEMTEFQDKAISNSHYVLELLLPNIHLTLPNKGFYEKLYNRIFNDLLLWEPTAPSPVETLENVSYGIGLSVASQLINTFSKDSFSPFKSAVHYDEDSGSEEETLQYFSAVDPNYRSRRKKKLDSQNKNSQSFLSVLLSINHGLMAVFTDVKQENGDPMESKHGEFWLEFNSGSFFCVTKYEGFEDKHYICLHSSSLRLYHKGIVDGAILPTETRLPCSTRPHWLEPTIYSSEEDGLSRTASDGVGGDNLNMLSVAVKILSDKSESNTKEFLVAVGLKGATLQHRVLPAGLSWHEQILNFLNIADEPVLGYNPPTSFTTFHVHLWSCALDYRPLHLPLRSLLTVETFSISSSVALDKSSSTLRIIMDEAALHLSDKCNTVTVNLNRDYVRVMDMGLLELTITAVKSDSDGEQTAPRFELHCSSDVVHIRTCSDSCAALMNLIQYVASYGDLHGPHKAEMKPGVPQRKPKVDSSARSSSHGPVLPEADQQILRDLMSDAMEEIDLQQASAPVGPQANGVLDEKSHTQEPCCSDLFLFPDESGNVSQESSPAYPSLTHHLISDAVTGVTAENDDFCILFAPKTVVQEKEEEPVIKIMVDDAIVIKDDYFSLPITRTDSSKAPLHFPIPAVRYVVKEVSLVWHLYGGKDFATAPPTSPAKSYIPHSSPSQTPTRHGRHTVCGGKGRNHDFLMEIQLSKVKFQHEVYPPCKPECESSLLEHPVSRQVFIVQDLEIRDRLATSQMNKFLYLYCSKDMPRKAHSNMLTIKALHVRPESGRSPQECCLRVSLMPLRLNIDQDALFFLKDFFTSLSTEVELLLTPDPEVTKSPGADVTCSLPRHLSTSKEPNLVVSFPGPKQASPNHRANSAEGGNGLEEDVSAEETSFSDQPVFFREFRFTAEVPIRLDYHGKHVSMDQGTLAGILIGLAQLNCSELKLKRLFYRHGLLGIDKLFSYAISEWLSDIKKNQLPGILGGVGPMHSLVQLVQGLKDLVWLPIEQYRKDGRIVRGFQRGAASFGTSTAMAALELTNRMVQTIQAAAETAYDMVSPSTLSIEPKKAKRFPHHRLAHQPVDLREGVAKAYSVVKEGITDTAQTIYETAAREHESRGVTGAVGEVLRQIPPAVVRPLIVATEATSNVLGGMRNQIRPDVRQDESQKWRHGED</sequence>
<organism>
    <name type="scientific">Mus musculus</name>
    <name type="common">Mouse</name>
    <dbReference type="NCBI Taxonomy" id="10090"/>
    <lineage>
        <taxon>Eukaryota</taxon>
        <taxon>Metazoa</taxon>
        <taxon>Chordata</taxon>
        <taxon>Craniata</taxon>
        <taxon>Vertebrata</taxon>
        <taxon>Euteleostomi</taxon>
        <taxon>Mammalia</taxon>
        <taxon>Eutheria</taxon>
        <taxon>Euarchontoglires</taxon>
        <taxon>Glires</taxon>
        <taxon>Rodentia</taxon>
        <taxon>Myomorpha</taxon>
        <taxon>Muroidea</taxon>
        <taxon>Muridae</taxon>
        <taxon>Murinae</taxon>
        <taxon>Mus</taxon>
        <taxon>Mus</taxon>
    </lineage>
</organism>